<name>CD22_MOUSE</name>
<sequence length="868" mass="97181">MRVHYLWLLLILGHVASARYSSANDWTVDHPQTLFAWEGACIRIPCKYKTPLPKARLDNILLFQNYEFDKATKKFTGTVLYNATKTEKDPESELYLSKQGRVTFLGNRIDNCTLKIHPIRANDSGNLGLRMTAGTERWMEPIHLNVSEKPFQPYIQMPSEIRESQSVTLTCGLNFSCFGYDILLKWFLEDSEITSITSSVTSITSSVTSSIKNVYTESKLTFQPKWTDHGKSVKCQVQHSSKVLSERTVRLDVKYTPKLEIKVNPTEVEKNNSVTMTCRVNSSNPKLRTVAVSWFKDGRPLEDQELEQEQQMSKLILHSVTKDMRGKYRCQASNDIGPGESEEVELTVHYAPEPSRVHIYPSPAEEGQSVELICESLASPSATNYTWYHNRKPIPGDTQEKLRIPKVSPWHAGNYSCLAENRLGHGKIDQEAKLDVHYAPKAVTTVIQSFTPILEGDSVTLVCRYNSSNPDVTSYRWNPQGSGSVLKPGVLRIQKVTWDSMPVSCAACNHKCSWALPVILNVHYAPRDVKVLKVSPASEIRAGQRVLLQCDFAESNPAEVRFFWKKNGSLVQEGRYLSFGSVSPEDSGNYNCMVNNSIGETLSQAWNLQVLYAPRRLRVSISPGDHVMEGKKATLSCESDANPPISQYTWFDSSGQDLHSSGQKLRLEPLEVQHTGSYRCKGTNGIGTGESPPSTLTVYYSPETIGKRVALGLGFCLTICILAIWGMKIQKKWKQNRSQQGLQENSSGQSFFVRNKKARRTPLSEGPQSQGCYNPAMDDTVSYAILRFPESDTHNTGDAGTPATQAPPPNNSDSVTYSVIQKRPMGDYENVNPSCPEDESIHYSELVQFGAGKRPQAKEDVDYVTLKH</sequence>
<comment type="function">
    <text evidence="2 10 12">Most highly expressed siglec (sialic acid-binding immunoglobulin-like lectin) on B-cells that plays a role in various aspects of B-cell biology including differentiation, antigen presentation, and trafficking to bone marrow (PubMed:7533044, PubMed:9016707). Binds to alpha 2,6-linked sialic acid residues of surface molecules such as CD22 itself, CD45 and IgM in a cis configuration. Can also bind to ligands on other cells as an adhesion molecule in a trans configuration. Acts as an inhibitory coreceptor on the surface of B-cells and inhibits B-cell receptor induced signaling, characterized by inhibition of the calcium mobilization and cellular activation (PubMed:9016707). Mechanistically, the immunoreceptor tyrosine-based inhibitory motif domain is phosphorylated by the Src kinase LYN, which in turn leads to the recruitment of the protein tyrosine phosphatase 1/PTPN6, leading to the negative regulation of BCR signaling. If this negative signaling from is of sufficient strength, apoptosis of the B-cell can be induced.</text>
</comment>
<comment type="subunit">
    <text evidence="2 6 8">Predominantly monomer of isoform CD22-beta. Also found as heterodimer of isoform CD22-beta and a shorter isoform. Interacts with PTPN6/SHP-1, LYN, SYK, PIK3R1/PIK3R2 and PLCG1 upon phosphorylation (PubMed:10373493). Interacts with GRB2, INPP5D and SHC1 upon phosphorylation (By similarity). May form a complex with INPP5D/SHIP, GRB2 and SHC1 (PubMed:10748054).</text>
</comment>
<comment type="interaction">
    <interactant intactId="EBI-300059">
        <id>P35329</id>
    </interactant>
    <interactant intactId="EBI-1688">
        <id>Q60631</id>
        <label>Grb2</label>
    </interactant>
    <organismsDiffer>false</organismsDiffer>
    <experiments>4</experiments>
</comment>
<comment type="interaction">
    <interactant intactId="EBI-300059">
        <id>P35329</id>
    </interactant>
    <interactant intactId="EBI-2620699">
        <id>P29351</id>
        <label>Ptpn6</label>
    </interactant>
    <organismsDiffer>false</organismsDiffer>
    <experiments>5</experiments>
</comment>
<comment type="subcellular location">
    <subcellularLocation>
        <location evidence="2">Cell membrane</location>
        <topology evidence="2">Single-pass type I membrane protein</topology>
    </subcellularLocation>
</comment>
<comment type="alternative products">
    <event type="alternative splicing"/>
    <isoform>
        <id>P35329-1</id>
        <name>1</name>
        <name>CD22-beta</name>
        <sequence type="displayed"/>
    </isoform>
    <isoform>
        <id>P35329-2</id>
        <name>2</name>
        <sequence type="described" ref="VSP_002532"/>
    </isoform>
    <isoform>
        <id>P35329-3</id>
        <name>3</name>
        <sequence type="described" ref="VSP_002533"/>
    </isoform>
</comment>
<comment type="tissue specificity">
    <text>B-lymphocytes.</text>
</comment>
<comment type="domain">
    <text>Contains 3 copies of a cytoplasmic motif that is referred to as the immunoreceptor tyrosine-based inhibitor motif (ITIM). This motif is involved in modulation of cellular responses. The phosphorylated ITIM motif can bind the SH2 domain of several SH2-containing phosphatases.</text>
</comment>
<comment type="PTM">
    <text evidence="13">Phosphorylated on tyrosine residues by LYN.</text>
</comment>
<comment type="PTM">
    <text evidence="6">Phosphorylation of Tyr-783 and Tyr-843 are involved in binding to SYK. Phosphorylation of Tyr-828 is involved in binding to GRB2. Phosphorylation of Tyr-863 is involved in binding to SYK, PLCG2 and PIK3R1/PIK3R2.</text>
</comment>
<comment type="disruption phenotype">
    <text evidence="12">In Cd22-deficiency mice, B-cell development is normal. There are normal numbers of peripheral B cells, but these have a more mature phenotype. In addition, recirculating B-cells are absent from the bone marrow. Deficiency results also in elevated Ca(2+) mobilization in response to BCR stimulation and a lower survival due to an increased induction of apoptosis.</text>
</comment>
<comment type="similarity">
    <text evidence="16">Belongs to the immunoglobulin superfamily. SIGLEC (sialic acid binding Ig-like lectin) family.</text>
</comment>
<comment type="online information" name="Functional Glycomics Gateway - Glycan Binding">
    <link uri="http://www.functionalglycomics.org/glycomics/GBPServlet?&amp;operationType=view&amp;cbpId=cbp_mou_Itlect_194"/>
    <text>Siglec-2</text>
</comment>
<gene>
    <name evidence="14 18" type="primary">Cd22</name>
    <name type="synonym">Lyb-8</name>
    <name type="synonym">Siglec2</name>
</gene>
<accession>P35329</accession>
<accession>Q3UP36</accession>
<accession>Q9JHL2</accession>
<accession>Q9JJX9</accession>
<accession>Q9JJY0</accession>
<accession>Q9JJY1</accession>
<accession>Q9R056</accession>
<accession>Q9R094</accession>
<accession>Q9WU51</accession>
<evidence type="ECO:0000250" key="1"/>
<evidence type="ECO:0000250" key="2">
    <source>
        <dbReference type="UniProtKB" id="P20273"/>
    </source>
</evidence>
<evidence type="ECO:0000255" key="3"/>
<evidence type="ECO:0000255" key="4">
    <source>
        <dbReference type="PROSITE-ProRule" id="PRU00114"/>
    </source>
</evidence>
<evidence type="ECO:0000256" key="5">
    <source>
        <dbReference type="SAM" id="MobiDB-lite"/>
    </source>
</evidence>
<evidence type="ECO:0000269" key="6">
    <source>
    </source>
</evidence>
<evidence type="ECO:0000269" key="7">
    <source>
    </source>
</evidence>
<evidence type="ECO:0000269" key="8">
    <source>
    </source>
</evidence>
<evidence type="ECO:0000269" key="9">
    <source>
    </source>
</evidence>
<evidence type="ECO:0000269" key="10">
    <source>
    </source>
</evidence>
<evidence type="ECO:0000269" key="11">
    <source>
    </source>
</evidence>
<evidence type="ECO:0000269" key="12">
    <source>
    </source>
</evidence>
<evidence type="ECO:0000269" key="13">
    <source>
    </source>
</evidence>
<evidence type="ECO:0000303" key="14">
    <source>
    </source>
</evidence>
<evidence type="ECO:0000303" key="15">
    <source>
    </source>
</evidence>
<evidence type="ECO:0000305" key="16"/>
<evidence type="ECO:0000305" key="17">
    <source>
    </source>
</evidence>
<evidence type="ECO:0000312" key="18">
    <source>
        <dbReference type="MGI" id="MGI:88322"/>
    </source>
</evidence>
<evidence type="ECO:0007744" key="19">
    <source>
    </source>
</evidence>
<proteinExistence type="evidence at protein level"/>
<reference key="1">
    <citation type="journal article" date="1993" name="J. Immunol.">
        <title>Organization of the murine Cd22 locus. Mapping to chromosome 7 and characterization of two alleles.</title>
        <authorList>
            <person name="Law C.-L."/>
            <person name="Torres R.M."/>
            <person name="Sundberg H.A."/>
            <person name="Parkhouse R.M."/>
            <person name="Brannan C.I."/>
            <person name="Copeland N.G."/>
            <person name="Jenkins N.A."/>
            <person name="Clark E.A."/>
        </authorList>
    </citation>
    <scope>NUCLEOTIDE SEQUENCE [MRNA]</scope>
    <scope>VARIANTS ALA-15; GLN-19; LYS-76; 83-ALA--THR-86 DELINS LYS-ALA-GLU-PRO; 88-LYS--GLU-93 DEL; 96-LEU-SER-97 DELINS PRO-PRO; ARG-100; SER-108; GLU-179; GLN-185 AND LYS-192; VAL-196; PRO-198; GLU-242; MET-793; ALA-796</scope>
    <source>
        <strain>DBA/2J</strain>
        <tissue>Liver</tissue>
    </source>
</reference>
<reference key="2">
    <citation type="journal article" date="1999" name="Immunogenetics">
        <title>Polymorphisms in the Cd22 gene of inbred mouse strains.</title>
        <authorList>
            <person name="Lajaunias F."/>
            <person name="Ibnou-Zekri N."/>
            <person name="Fossati Jimack L."/>
            <person name="Chicheportiche Y."/>
            <person name="Parkhouse R.M."/>
            <person name="Mary C."/>
            <person name="Reininger L."/>
            <person name="Brighouse G."/>
            <person name="Izui S."/>
        </authorList>
    </citation>
    <scope>NUCLEOTIDE SEQUENCE [MRNA]</scope>
    <scope>VARIANTS LYS-76; 118-PRO--ARG-120 DELINS LEU-ILE-HIS; GLU-179; GLN-185; LYS-192; VAL-196; PRO-198; GLU-242; HIS-250; GLN-279; ILE-386; HIS-393; LEU-409; ARG-425; GLY-429; SER-488; LYS-554; ARG-626; ALA-796 AND THR-814</scope>
    <source>
        <strain>BXSB</strain>
        <strain>C57BL/6J</strain>
        <strain>MRL/MpJ</strain>
    </source>
</reference>
<reference key="3">
    <citation type="journal article" date="2005" name="Science">
        <title>The transcriptional landscape of the mammalian genome.</title>
        <authorList>
            <person name="Carninci P."/>
            <person name="Kasukawa T."/>
            <person name="Katayama S."/>
            <person name="Gough J."/>
            <person name="Frith M.C."/>
            <person name="Maeda N."/>
            <person name="Oyama R."/>
            <person name="Ravasi T."/>
            <person name="Lenhard B."/>
            <person name="Wells C."/>
            <person name="Kodzius R."/>
            <person name="Shimokawa K."/>
            <person name="Bajic V.B."/>
            <person name="Brenner S.E."/>
            <person name="Batalov S."/>
            <person name="Forrest A.R."/>
            <person name="Zavolan M."/>
            <person name="Davis M.J."/>
            <person name="Wilming L.G."/>
            <person name="Aidinis V."/>
            <person name="Allen J.E."/>
            <person name="Ambesi-Impiombato A."/>
            <person name="Apweiler R."/>
            <person name="Aturaliya R.N."/>
            <person name="Bailey T.L."/>
            <person name="Bansal M."/>
            <person name="Baxter L."/>
            <person name="Beisel K.W."/>
            <person name="Bersano T."/>
            <person name="Bono H."/>
            <person name="Chalk A.M."/>
            <person name="Chiu K.P."/>
            <person name="Choudhary V."/>
            <person name="Christoffels A."/>
            <person name="Clutterbuck D.R."/>
            <person name="Crowe M.L."/>
            <person name="Dalla E."/>
            <person name="Dalrymple B.P."/>
            <person name="de Bono B."/>
            <person name="Della Gatta G."/>
            <person name="di Bernardo D."/>
            <person name="Down T."/>
            <person name="Engstrom P."/>
            <person name="Fagiolini M."/>
            <person name="Faulkner G."/>
            <person name="Fletcher C.F."/>
            <person name="Fukushima T."/>
            <person name="Furuno M."/>
            <person name="Futaki S."/>
            <person name="Gariboldi M."/>
            <person name="Georgii-Hemming P."/>
            <person name="Gingeras T.R."/>
            <person name="Gojobori T."/>
            <person name="Green R.E."/>
            <person name="Gustincich S."/>
            <person name="Harbers M."/>
            <person name="Hayashi Y."/>
            <person name="Hensch T.K."/>
            <person name="Hirokawa N."/>
            <person name="Hill D."/>
            <person name="Huminiecki L."/>
            <person name="Iacono M."/>
            <person name="Ikeo K."/>
            <person name="Iwama A."/>
            <person name="Ishikawa T."/>
            <person name="Jakt M."/>
            <person name="Kanapin A."/>
            <person name="Katoh M."/>
            <person name="Kawasawa Y."/>
            <person name="Kelso J."/>
            <person name="Kitamura H."/>
            <person name="Kitano H."/>
            <person name="Kollias G."/>
            <person name="Krishnan S.P."/>
            <person name="Kruger A."/>
            <person name="Kummerfeld S.K."/>
            <person name="Kurochkin I.V."/>
            <person name="Lareau L.F."/>
            <person name="Lazarevic D."/>
            <person name="Lipovich L."/>
            <person name="Liu J."/>
            <person name="Liuni S."/>
            <person name="McWilliam S."/>
            <person name="Madan Babu M."/>
            <person name="Madera M."/>
            <person name="Marchionni L."/>
            <person name="Matsuda H."/>
            <person name="Matsuzawa S."/>
            <person name="Miki H."/>
            <person name="Mignone F."/>
            <person name="Miyake S."/>
            <person name="Morris K."/>
            <person name="Mottagui-Tabar S."/>
            <person name="Mulder N."/>
            <person name="Nakano N."/>
            <person name="Nakauchi H."/>
            <person name="Ng P."/>
            <person name="Nilsson R."/>
            <person name="Nishiguchi S."/>
            <person name="Nishikawa S."/>
            <person name="Nori F."/>
            <person name="Ohara O."/>
            <person name="Okazaki Y."/>
            <person name="Orlando V."/>
            <person name="Pang K.C."/>
            <person name="Pavan W.J."/>
            <person name="Pavesi G."/>
            <person name="Pesole G."/>
            <person name="Petrovsky N."/>
            <person name="Piazza S."/>
            <person name="Reed J."/>
            <person name="Reid J.F."/>
            <person name="Ring B.Z."/>
            <person name="Ringwald M."/>
            <person name="Rost B."/>
            <person name="Ruan Y."/>
            <person name="Salzberg S.L."/>
            <person name="Sandelin A."/>
            <person name="Schneider C."/>
            <person name="Schoenbach C."/>
            <person name="Sekiguchi K."/>
            <person name="Semple C.A."/>
            <person name="Seno S."/>
            <person name="Sessa L."/>
            <person name="Sheng Y."/>
            <person name="Shibata Y."/>
            <person name="Shimada H."/>
            <person name="Shimada K."/>
            <person name="Silva D."/>
            <person name="Sinclair B."/>
            <person name="Sperling S."/>
            <person name="Stupka E."/>
            <person name="Sugiura K."/>
            <person name="Sultana R."/>
            <person name="Takenaka Y."/>
            <person name="Taki K."/>
            <person name="Tammoja K."/>
            <person name="Tan S.L."/>
            <person name="Tang S."/>
            <person name="Taylor M.S."/>
            <person name="Tegner J."/>
            <person name="Teichmann S.A."/>
            <person name="Ueda H.R."/>
            <person name="van Nimwegen E."/>
            <person name="Verardo R."/>
            <person name="Wei C.L."/>
            <person name="Yagi K."/>
            <person name="Yamanishi H."/>
            <person name="Zabarovsky E."/>
            <person name="Zhu S."/>
            <person name="Zimmer A."/>
            <person name="Hide W."/>
            <person name="Bult C."/>
            <person name="Grimmond S.M."/>
            <person name="Teasdale R.D."/>
            <person name="Liu E.T."/>
            <person name="Brusic V."/>
            <person name="Quackenbush J."/>
            <person name="Wahlestedt C."/>
            <person name="Mattick J.S."/>
            <person name="Hume D.A."/>
            <person name="Kai C."/>
            <person name="Sasaki D."/>
            <person name="Tomaru Y."/>
            <person name="Fukuda S."/>
            <person name="Kanamori-Katayama M."/>
            <person name="Suzuki M."/>
            <person name="Aoki J."/>
            <person name="Arakawa T."/>
            <person name="Iida J."/>
            <person name="Imamura K."/>
            <person name="Itoh M."/>
            <person name="Kato T."/>
            <person name="Kawaji H."/>
            <person name="Kawagashira N."/>
            <person name="Kawashima T."/>
            <person name="Kojima M."/>
            <person name="Kondo S."/>
            <person name="Konno H."/>
            <person name="Nakano K."/>
            <person name="Ninomiya N."/>
            <person name="Nishio T."/>
            <person name="Okada M."/>
            <person name="Plessy C."/>
            <person name="Shibata K."/>
            <person name="Shiraki T."/>
            <person name="Suzuki S."/>
            <person name="Tagami M."/>
            <person name="Waki K."/>
            <person name="Watahiki A."/>
            <person name="Okamura-Oho Y."/>
            <person name="Suzuki H."/>
            <person name="Kawai J."/>
            <person name="Hayashizaki Y."/>
        </authorList>
    </citation>
    <scope>NUCLEOTIDE SEQUENCE [LARGE SCALE MRNA]</scope>
    <source>
        <strain>C57BL/6J</strain>
        <tissue>Spleen</tissue>
    </source>
</reference>
<reference key="4">
    <citation type="journal article" date="2009" name="PLoS Biol.">
        <title>Lineage-specific biology revealed by a finished genome assembly of the mouse.</title>
        <authorList>
            <person name="Church D.M."/>
            <person name="Goodstadt L."/>
            <person name="Hillier L.W."/>
            <person name="Zody M.C."/>
            <person name="Goldstein S."/>
            <person name="She X."/>
            <person name="Bult C.J."/>
            <person name="Agarwala R."/>
            <person name="Cherry J.L."/>
            <person name="DiCuccio M."/>
            <person name="Hlavina W."/>
            <person name="Kapustin Y."/>
            <person name="Meric P."/>
            <person name="Maglott D."/>
            <person name="Birtle Z."/>
            <person name="Marques A.C."/>
            <person name="Graves T."/>
            <person name="Zhou S."/>
            <person name="Teague B."/>
            <person name="Potamousis K."/>
            <person name="Churas C."/>
            <person name="Place M."/>
            <person name="Herschleb J."/>
            <person name="Runnheim R."/>
            <person name="Forrest D."/>
            <person name="Amos-Landgraf J."/>
            <person name="Schwartz D.C."/>
            <person name="Cheng Z."/>
            <person name="Lindblad-Toh K."/>
            <person name="Eichler E.E."/>
            <person name="Ponting C.P."/>
        </authorList>
    </citation>
    <scope>NUCLEOTIDE SEQUENCE [LARGE SCALE GENOMIC DNA]</scope>
    <source>
        <strain>C57BL/6J</strain>
    </source>
</reference>
<reference key="5">
    <citation type="journal article" date="2000" name="J. Immunol.">
        <title>Dysregulated expression of the Cd22 gene as a result of a short interspersed nucleotide element insertion in Cd22alpha lupus-prone mice.</title>
        <authorList>
            <person name="Mary C."/>
            <person name="Laporte C."/>
            <person name="Parzy D."/>
            <person name="Santiago M.L."/>
            <person name="Stefani F."/>
            <person name="Lajaunias F."/>
            <person name="Parkhouse M.E."/>
            <person name="O'Keefe T.L."/>
            <person name="Neuberger M.S."/>
            <person name="Izui S."/>
            <person name="Reininger L."/>
        </authorList>
    </citation>
    <scope>NUCLEOTIDE SEQUENCE [MRNA] OF 1-184 (ISOFORMS 1; 2 AND 3)</scope>
    <scope>VARIANTS ALA-15; GLN-19; LYS-76; 83-ALA--THR-86 DELINS LYS-ALA-GLU-PRO; 83-ALA-THR-84 DELINS LYS-ALA; 85-LYS--PRO-90 DEL; 88-LYS--GLU-93 DEL; 92-SER-GLU-93 DELINS PRO-GLY; 96-LEU-SER-97 DELINS PRO-PRO; ARG-100; SER-108 AND GLU-179</scope>
    <source>
        <strain>NZW/LacJ</strain>
        <tissue>Spleen</tissue>
    </source>
</reference>
<reference key="6">
    <citation type="journal article" date="1994" name="Curr. Biol.">
        <title>Sialoadhesin, myelin-associated glycoprotein and CD22 define a new family of sialic acid-dependent adhesion molecules of the immunoglobulin superfamily.</title>
        <authorList>
            <person name="Kelm S."/>
            <person name="Pelz A."/>
            <person name="Schauer R."/>
            <person name="Filbin M.T."/>
            <person name="Tang S."/>
            <person name="de Bellard M.E."/>
            <person name="Schnaar R.L."/>
            <person name="Mahoney J.A."/>
            <person name="Hartnell A."/>
            <person name="Bradfield P."/>
            <person name="Crocker P.R."/>
        </authorList>
    </citation>
    <scope>SIALIC ACID-BINDING</scope>
    <scope>FUNCTION</scope>
</reference>
<reference key="7">
    <citation type="journal article" date="1997" name="Curr. Biol.">
        <title>CD22 is a negative regulator of B-cell receptor signalling.</title>
        <authorList>
            <person name="Nitschke L."/>
            <person name="Carsetti R."/>
            <person name="Ocker B."/>
            <person name="Koehler G."/>
            <person name="Lamers M.C."/>
        </authorList>
    </citation>
    <scope>FUNCTION</scope>
    <scope>DISRUPTION PHENOTYPE</scope>
</reference>
<reference key="8">
    <citation type="journal article" date="1998" name="Curr. Biol.">
        <title>Defective negative regulation of antigen receptor signaling in Lyn-deficient B lymphocytes.</title>
        <authorList>
            <person name="Chan V.W."/>
            <person name="Lowell C.A."/>
            <person name="DeFranco A.L."/>
        </authorList>
    </citation>
    <scope>PHOSPHORYLATION BY LYN</scope>
</reference>
<reference key="9">
    <citation type="journal article" date="1999" name="J. Biol. Chem.">
        <title>Analysis of tyrosine phosphorylation-dependent interactions between stimulatory effector proteins and the B cell co-receptor CD22.</title>
        <authorList>
            <person name="Yohannan J."/>
            <person name="Wienands J."/>
            <person name="Coggeshall K.M."/>
            <person name="Justement L.B."/>
        </authorList>
    </citation>
    <scope>INTERACTION WITH GRB2; SYK; PIK3R1/PIK3R2 AND PLCG1</scope>
    <scope>PHOSPHORYLATION AT TYR-783; TYR-828; TYR-843 AND TYR-863</scope>
    <scope>MUTAGENESIS OF TYR-828</scope>
</reference>
<reference key="10">
    <citation type="journal article" date="2000" name="J. Biol. Chem.">
        <title>CD22 forms a quaternary complex with SHIP, Grb2, and Shc. A pathway for regulation of B lymphocyte antigen receptor-induced calcium flux.</title>
        <authorList>
            <person name="Poe J.C."/>
            <person name="Fujimoto M."/>
            <person name="Jansen P.J."/>
            <person name="Miller A.S."/>
            <person name="Tedder T.F."/>
        </authorList>
    </citation>
    <scope>INTERACTION WITH GRB2; SHC1 AND INPP5D</scope>
    <scope>PHOSPHORYLATION BY LYN</scope>
</reference>
<reference key="11">
    <citation type="journal article" date="2010" name="Cell">
        <title>A tissue-specific atlas of mouse protein phosphorylation and expression.</title>
        <authorList>
            <person name="Huttlin E.L."/>
            <person name="Jedrychowski M.P."/>
            <person name="Elias J.E."/>
            <person name="Goswami T."/>
            <person name="Rad R."/>
            <person name="Beausoleil S.A."/>
            <person name="Villen J."/>
            <person name="Haas W."/>
            <person name="Sowa M.E."/>
            <person name="Gygi S.P."/>
        </authorList>
    </citation>
    <scope>PHOSPHORYLATION [LARGE SCALE ANALYSIS] AT SER-746; SER-747 AND SER-750</scope>
    <scope>IDENTIFICATION BY MASS SPECTROMETRY [LARGE SCALE ANALYSIS]</scope>
    <source>
        <tissue>Spleen</tissue>
    </source>
</reference>
<dbReference type="EMBL" id="L16928">
    <property type="protein sequence ID" value="AAA02562.1"/>
    <property type="molecule type" value="mRNA"/>
</dbReference>
<dbReference type="EMBL" id="AF115401">
    <property type="protein sequence ID" value="AAD30392.1"/>
    <property type="molecule type" value="mRNA"/>
</dbReference>
<dbReference type="EMBL" id="AF115400">
    <property type="protein sequence ID" value="AAD30391.1"/>
    <property type="molecule type" value="mRNA"/>
</dbReference>
<dbReference type="EMBL" id="AF102134">
    <property type="protein sequence ID" value="AAF02417.1"/>
    <property type="molecule type" value="mRNA"/>
</dbReference>
<dbReference type="EMBL" id="AK143835">
    <property type="protein sequence ID" value="BAE25561.1"/>
    <property type="molecule type" value="mRNA"/>
</dbReference>
<dbReference type="EMBL" id="AC165340">
    <property type="status" value="NOT_ANNOTATED_CDS"/>
    <property type="molecule type" value="Genomic_DNA"/>
</dbReference>
<dbReference type="EMBL" id="AJ250676">
    <property type="protein sequence ID" value="CAB85609.1"/>
    <property type="molecule type" value="mRNA"/>
</dbReference>
<dbReference type="EMBL" id="AJ250677">
    <property type="protein sequence ID" value="CAB85610.1"/>
    <property type="molecule type" value="mRNA"/>
</dbReference>
<dbReference type="EMBL" id="AJ250678">
    <property type="protein sequence ID" value="CAB85611.1"/>
    <property type="molecule type" value="mRNA"/>
</dbReference>
<dbReference type="EMBL" id="AJ250679">
    <property type="protein sequence ID" value="CAB85612.1"/>
    <property type="molecule type" value="mRNA"/>
</dbReference>
<dbReference type="EMBL" id="AJ250680">
    <property type="protein sequence ID" value="CAB85613.1"/>
    <property type="molecule type" value="mRNA"/>
</dbReference>
<dbReference type="EMBL" id="AJ250682">
    <property type="protein sequence ID" value="CAB85615.1"/>
    <property type="molecule type" value="mRNA"/>
</dbReference>
<dbReference type="EMBL" id="AJ250683">
    <property type="protein sequence ID" value="CAB85616.1"/>
    <property type="molecule type" value="mRNA"/>
</dbReference>
<dbReference type="CCDS" id="CCDS21114.1">
    <molecule id="P35329-1"/>
</dbReference>
<dbReference type="PIR" id="A46512">
    <property type="entry name" value="A46512"/>
</dbReference>
<dbReference type="PIR" id="I49583">
    <property type="entry name" value="I49583"/>
</dbReference>
<dbReference type="RefSeq" id="NP_001036782.1">
    <molecule id="P35329-1"/>
    <property type="nucleotide sequence ID" value="NM_001043317.2"/>
</dbReference>
<dbReference type="RefSeq" id="NP_033975.3">
    <molecule id="P35329-1"/>
    <property type="nucleotide sequence ID" value="NM_009845.3"/>
</dbReference>
<dbReference type="RefSeq" id="XP_006539556.1">
    <molecule id="P35329-1"/>
    <property type="nucleotide sequence ID" value="XM_006539493.1"/>
</dbReference>
<dbReference type="RefSeq" id="XP_006539557.1">
    <property type="nucleotide sequence ID" value="XM_006539494.2"/>
</dbReference>
<dbReference type="SMR" id="P35329"/>
<dbReference type="BioGRID" id="198581">
    <property type="interactions" value="8"/>
</dbReference>
<dbReference type="CORUM" id="P35329"/>
<dbReference type="FunCoup" id="P35329">
    <property type="interactions" value="332"/>
</dbReference>
<dbReference type="IntAct" id="P35329">
    <property type="interactions" value="13"/>
</dbReference>
<dbReference type="MINT" id="P35329"/>
<dbReference type="STRING" id="10090.ENSMUSP00000019248"/>
<dbReference type="BindingDB" id="P35329"/>
<dbReference type="ChEMBL" id="CHEMBL1075279"/>
<dbReference type="GlyCosmos" id="P35329">
    <property type="glycosylation" value="11 sites, No reported glycans"/>
</dbReference>
<dbReference type="GlyGen" id="P35329">
    <property type="glycosylation" value="13 sites, 6 N-linked glycans (6 sites), 1 O-linked glycan (1 site)"/>
</dbReference>
<dbReference type="iPTMnet" id="P35329"/>
<dbReference type="PhosphoSitePlus" id="P35329"/>
<dbReference type="jPOST" id="P35329"/>
<dbReference type="PaxDb" id="10090-ENSMUSP00000019248"/>
<dbReference type="ProteomicsDB" id="283740">
    <molecule id="P35329-1"/>
</dbReference>
<dbReference type="ProteomicsDB" id="283741">
    <molecule id="P35329-2"/>
</dbReference>
<dbReference type="ProteomicsDB" id="283742">
    <molecule id="P35329-3"/>
</dbReference>
<dbReference type="ProteomicsDB" id="328745"/>
<dbReference type="Antibodypedia" id="3714">
    <property type="antibodies" value="2673 antibodies from 56 providers"/>
</dbReference>
<dbReference type="DNASU" id="12483"/>
<dbReference type="Ensembl" id="ENSMUST00000019248.13">
    <molecule id="P35329-1"/>
    <property type="protein sequence ID" value="ENSMUSP00000019248.7"/>
    <property type="gene ID" value="ENSMUSG00000030577.15"/>
</dbReference>
<dbReference type="Ensembl" id="ENSMUST00000108125.9">
    <molecule id="P35329-1"/>
    <property type="protein sequence ID" value="ENSMUSP00000103760.3"/>
    <property type="gene ID" value="ENSMUSG00000030577.15"/>
</dbReference>
<dbReference type="Ensembl" id="ENSMUST00000186154.7">
    <molecule id="P35329-1"/>
    <property type="protein sequence ID" value="ENSMUSP00000139685.2"/>
    <property type="gene ID" value="ENSMUSG00000030577.15"/>
</dbReference>
<dbReference type="Ensembl" id="ENSMUST00000189718.7">
    <molecule id="P35329-1"/>
    <property type="protein sequence ID" value="ENSMUSP00000140521.2"/>
    <property type="gene ID" value="ENSMUSG00000030577.15"/>
</dbReference>
<dbReference type="Ensembl" id="ENSMUST00000190617.7">
    <molecule id="P35329-1"/>
    <property type="protein sequence ID" value="ENSMUSP00000139871.2"/>
    <property type="gene ID" value="ENSMUSG00000030577.15"/>
</dbReference>
<dbReference type="GeneID" id="12483"/>
<dbReference type="KEGG" id="mmu:12483"/>
<dbReference type="UCSC" id="uc009ggr.2">
    <property type="organism name" value="mouse"/>
</dbReference>
<dbReference type="AGR" id="MGI:88322"/>
<dbReference type="CTD" id="933"/>
<dbReference type="MGI" id="MGI:88322">
    <property type="gene designation" value="Cd22"/>
</dbReference>
<dbReference type="VEuPathDB" id="HostDB:ENSMUSG00000030577"/>
<dbReference type="eggNOG" id="KOG4475">
    <property type="taxonomic scope" value="Eukaryota"/>
</dbReference>
<dbReference type="GeneTree" id="ENSGT01120000271890"/>
<dbReference type="HOGENOM" id="CLU_017949_0_0_1"/>
<dbReference type="InParanoid" id="P35329"/>
<dbReference type="OMA" id="DWNNQDL"/>
<dbReference type="OrthoDB" id="10039395at2759"/>
<dbReference type="PhylomeDB" id="P35329"/>
<dbReference type="TreeFam" id="TF334827"/>
<dbReference type="Reactome" id="R-MMU-198933">
    <property type="pathway name" value="Immunoregulatory interactions between a Lymphoid and a non-Lymphoid cell"/>
</dbReference>
<dbReference type="Reactome" id="R-MMU-5690714">
    <property type="pathway name" value="CD22 mediated BCR regulation"/>
</dbReference>
<dbReference type="Reactome" id="R-MMU-983695">
    <property type="pathway name" value="Antigen activates B Cell Receptor (BCR) leading to generation of second messengers"/>
</dbReference>
<dbReference type="BioGRID-ORCS" id="12483">
    <property type="hits" value="4 hits in 80 CRISPR screens"/>
</dbReference>
<dbReference type="PRO" id="PR:P35329"/>
<dbReference type="Proteomes" id="UP000000589">
    <property type="component" value="Chromosome 7"/>
</dbReference>
<dbReference type="RNAct" id="P35329">
    <property type="molecule type" value="protein"/>
</dbReference>
<dbReference type="Bgee" id="ENSMUSG00000030577">
    <property type="expression patterns" value="Expressed in peripheral lymph node and 52 other cell types or tissues"/>
</dbReference>
<dbReference type="GO" id="GO:0009986">
    <property type="term" value="C:cell surface"/>
    <property type="evidence" value="ECO:0000314"/>
    <property type="project" value="ARUK-UCL"/>
</dbReference>
<dbReference type="GO" id="GO:0005769">
    <property type="term" value="C:early endosome"/>
    <property type="evidence" value="ECO:0007669"/>
    <property type="project" value="Ensembl"/>
</dbReference>
<dbReference type="GO" id="GO:0009897">
    <property type="term" value="C:external side of plasma membrane"/>
    <property type="evidence" value="ECO:0000314"/>
    <property type="project" value="MGI"/>
</dbReference>
<dbReference type="GO" id="GO:0032809">
    <property type="term" value="C:neuronal cell body membrane"/>
    <property type="evidence" value="ECO:0000314"/>
    <property type="project" value="ARUK-UCL"/>
</dbReference>
<dbReference type="GO" id="GO:0005886">
    <property type="term" value="C:plasma membrane"/>
    <property type="evidence" value="ECO:0000353"/>
    <property type="project" value="MGI"/>
</dbReference>
<dbReference type="GO" id="GO:0055037">
    <property type="term" value="C:recycling endosome"/>
    <property type="evidence" value="ECO:0007669"/>
    <property type="project" value="Ensembl"/>
</dbReference>
<dbReference type="GO" id="GO:0030246">
    <property type="term" value="F:carbohydrate binding"/>
    <property type="evidence" value="ECO:0007669"/>
    <property type="project" value="UniProtKB-KW"/>
</dbReference>
<dbReference type="GO" id="GO:0042609">
    <property type="term" value="F:CD4 receptor binding"/>
    <property type="evidence" value="ECO:0000353"/>
    <property type="project" value="ARUK-UCL"/>
</dbReference>
<dbReference type="GO" id="GO:0015026">
    <property type="term" value="F:coreceptor activity"/>
    <property type="evidence" value="ECO:0000304"/>
    <property type="project" value="MGI"/>
</dbReference>
<dbReference type="GO" id="GO:0019903">
    <property type="term" value="F:protein phosphatase binding"/>
    <property type="evidence" value="ECO:0000353"/>
    <property type="project" value="ARUK-UCL"/>
</dbReference>
<dbReference type="GO" id="GO:0033691">
    <property type="term" value="F:sialic acid binding"/>
    <property type="evidence" value="ECO:0000353"/>
    <property type="project" value="ARUK-UCL"/>
</dbReference>
<dbReference type="GO" id="GO:0042113">
    <property type="term" value="P:B cell activation"/>
    <property type="evidence" value="ECO:0007669"/>
    <property type="project" value="Ensembl"/>
</dbReference>
<dbReference type="GO" id="GO:0007155">
    <property type="term" value="P:cell adhesion"/>
    <property type="evidence" value="ECO:0007669"/>
    <property type="project" value="UniProtKB-KW"/>
</dbReference>
<dbReference type="GO" id="GO:0007166">
    <property type="term" value="P:cell surface receptor signaling pathway"/>
    <property type="evidence" value="ECO:0000304"/>
    <property type="project" value="MGI"/>
</dbReference>
<dbReference type="GO" id="GO:0050859">
    <property type="term" value="P:negative regulation of B cell receptor signaling pathway"/>
    <property type="evidence" value="ECO:0007669"/>
    <property type="project" value="Ensembl"/>
</dbReference>
<dbReference type="GO" id="GO:0050849">
    <property type="term" value="P:negative regulation of calcium-mediated signaling"/>
    <property type="evidence" value="ECO:0000316"/>
    <property type="project" value="ARUK-UCL"/>
</dbReference>
<dbReference type="GO" id="GO:0002638">
    <property type="term" value="P:negative regulation of immunoglobulin production"/>
    <property type="evidence" value="ECO:0000316"/>
    <property type="project" value="ARUK-UCL"/>
</dbReference>
<dbReference type="GO" id="GO:0030888">
    <property type="term" value="P:regulation of B cell proliferation"/>
    <property type="evidence" value="ECO:0000316"/>
    <property type="project" value="ARUK-UCL"/>
</dbReference>
<dbReference type="GO" id="GO:0030100">
    <property type="term" value="P:regulation of endocytosis"/>
    <property type="evidence" value="ECO:0007669"/>
    <property type="project" value="Ensembl"/>
</dbReference>
<dbReference type="GO" id="GO:0050776">
    <property type="term" value="P:regulation of immune response"/>
    <property type="evidence" value="ECO:0000316"/>
    <property type="project" value="ARUK-UCL"/>
</dbReference>
<dbReference type="CDD" id="cd00096">
    <property type="entry name" value="Ig"/>
    <property type="match status" value="2"/>
</dbReference>
<dbReference type="FunFam" id="2.60.40.10:FF:002011">
    <property type="entry name" value="B-cell receptor CD22"/>
    <property type="match status" value="1"/>
</dbReference>
<dbReference type="Gene3D" id="2.60.40.10">
    <property type="entry name" value="Immunoglobulins"/>
    <property type="match status" value="6"/>
</dbReference>
<dbReference type="InterPro" id="IPR013162">
    <property type="entry name" value="CD80_C2-set"/>
</dbReference>
<dbReference type="InterPro" id="IPR007110">
    <property type="entry name" value="Ig-like_dom"/>
</dbReference>
<dbReference type="InterPro" id="IPR036179">
    <property type="entry name" value="Ig-like_dom_sf"/>
</dbReference>
<dbReference type="InterPro" id="IPR013783">
    <property type="entry name" value="Ig-like_fold"/>
</dbReference>
<dbReference type="InterPro" id="IPR056386">
    <property type="entry name" value="Ig_CD22"/>
</dbReference>
<dbReference type="InterPro" id="IPR003599">
    <property type="entry name" value="Ig_sub"/>
</dbReference>
<dbReference type="InterPro" id="IPR003598">
    <property type="entry name" value="Ig_sub2"/>
</dbReference>
<dbReference type="PANTHER" id="PTHR46958">
    <property type="entry name" value="B-CELL RECEPTOR CD22"/>
    <property type="match status" value="1"/>
</dbReference>
<dbReference type="PANTHER" id="PTHR46958:SF1">
    <property type="entry name" value="B-CELL RECEPTOR CD22"/>
    <property type="match status" value="1"/>
</dbReference>
<dbReference type="Pfam" id="PF08205">
    <property type="entry name" value="C2-set_2"/>
    <property type="match status" value="1"/>
</dbReference>
<dbReference type="Pfam" id="PF13927">
    <property type="entry name" value="Ig_3"/>
    <property type="match status" value="4"/>
</dbReference>
<dbReference type="Pfam" id="PF24518">
    <property type="entry name" value="Ig_CD22"/>
    <property type="match status" value="1"/>
</dbReference>
<dbReference type="SMART" id="SM00409">
    <property type="entry name" value="IG"/>
    <property type="match status" value="7"/>
</dbReference>
<dbReference type="SMART" id="SM00408">
    <property type="entry name" value="IGc2"/>
    <property type="match status" value="5"/>
</dbReference>
<dbReference type="SUPFAM" id="SSF48726">
    <property type="entry name" value="Immunoglobulin"/>
    <property type="match status" value="7"/>
</dbReference>
<dbReference type="PROSITE" id="PS50835">
    <property type="entry name" value="IG_LIKE"/>
    <property type="match status" value="6"/>
</dbReference>
<protein>
    <recommendedName>
        <fullName evidence="16">B-cell receptor CD22</fullName>
    </recommendedName>
    <alternativeName>
        <fullName>B-lymphocyte cell adhesion molecule</fullName>
        <shortName>BL-CAM</shortName>
    </alternativeName>
    <alternativeName>
        <fullName>Sialic acid-binding Ig-like lectin 2</fullName>
        <shortName>Siglec-2</shortName>
    </alternativeName>
    <alternativeName>
        <fullName>T-cell surface antigen Leu-14</fullName>
    </alternativeName>
    <cdAntigenName>CD22</cdAntigenName>
</protein>
<feature type="signal peptide" evidence="3">
    <location>
        <begin position="1"/>
        <end position="21"/>
    </location>
</feature>
<feature type="chain" id="PRO_0000014874" description="B-cell receptor CD22">
    <location>
        <begin position="22"/>
        <end position="868"/>
    </location>
</feature>
<feature type="topological domain" description="Extracellular" evidence="3">
    <location>
        <begin position="22"/>
        <end position="708"/>
    </location>
</feature>
<feature type="transmembrane region" description="Helical" evidence="3">
    <location>
        <begin position="709"/>
        <end position="727"/>
    </location>
</feature>
<feature type="topological domain" description="Cytoplasmic" evidence="3">
    <location>
        <begin position="728"/>
        <end position="868"/>
    </location>
</feature>
<feature type="domain" description="Ig-like V-type">
    <location>
        <begin position="22"/>
        <end position="148"/>
    </location>
</feature>
<feature type="domain" description="Ig-like C2-type 1">
    <location>
        <begin position="153"/>
        <end position="250"/>
    </location>
</feature>
<feature type="domain" description="Ig-like C2-type 2">
    <location>
        <begin position="257"/>
        <end position="347"/>
    </location>
</feature>
<feature type="domain" description="Ig-like C2-type 3">
    <location>
        <begin position="352"/>
        <end position="435"/>
    </location>
</feature>
<feature type="domain" description="Ig-like C2-type 4">
    <location>
        <begin position="440"/>
        <end position="521"/>
    </location>
</feature>
<feature type="domain" description="Ig-like C2-type 5">
    <location>
        <begin position="526"/>
        <end position="603"/>
    </location>
</feature>
<feature type="domain" description="Ig-like C2-type 6">
    <location>
        <begin position="614"/>
        <end position="697"/>
    </location>
</feature>
<feature type="region of interest" description="Disordered" evidence="5">
    <location>
        <begin position="738"/>
        <end position="772"/>
    </location>
</feature>
<feature type="region of interest" description="Disordered" evidence="5">
    <location>
        <begin position="790"/>
        <end position="812"/>
    </location>
</feature>
<feature type="short sequence motif" description="ITIM motif 1">
    <location>
        <begin position="781"/>
        <end position="786"/>
    </location>
</feature>
<feature type="short sequence motif" description="ITIM motif 2">
    <location>
        <begin position="841"/>
        <end position="846"/>
    </location>
</feature>
<feature type="short sequence motif" description="ITIM motif 3">
    <location>
        <begin position="861"/>
        <end position="866"/>
    </location>
</feature>
<feature type="compositionally biased region" description="Polar residues" evidence="5">
    <location>
        <begin position="738"/>
        <end position="752"/>
    </location>
</feature>
<feature type="binding site" evidence="1">
    <location>
        <position position="130"/>
    </location>
    <ligand>
        <name>N-acetylneuraminate</name>
        <dbReference type="ChEBI" id="CHEBI:35418"/>
    </ligand>
</feature>
<feature type="modified residue" description="Phosphoserine" evidence="19">
    <location>
        <position position="746"/>
    </location>
</feature>
<feature type="modified residue" description="Phosphoserine" evidence="19">
    <location>
        <position position="747"/>
    </location>
</feature>
<feature type="modified residue" description="Phosphoserine" evidence="19">
    <location>
        <position position="750"/>
    </location>
</feature>
<feature type="modified residue" description="Phosphotyrosine" evidence="17">
    <location>
        <position position="783"/>
    </location>
</feature>
<feature type="modified residue" description="Phosphotyrosine" evidence="17">
    <location>
        <position position="828"/>
    </location>
</feature>
<feature type="modified residue" description="Phosphotyrosine" evidence="17">
    <location>
        <position position="843"/>
    </location>
</feature>
<feature type="modified residue" description="Phosphotyrosine" evidence="17">
    <location>
        <position position="863"/>
    </location>
</feature>
<feature type="glycosylation site" description="N-linked (GlcNAc...) asparagine" evidence="3">
    <location>
        <position position="111"/>
    </location>
</feature>
<feature type="glycosylation site" description="N-linked (GlcNAc...) asparagine" evidence="3">
    <location>
        <position position="122"/>
    </location>
</feature>
<feature type="glycosylation site" description="N-linked (GlcNAc...) asparagine" evidence="3">
    <location>
        <position position="145"/>
    </location>
</feature>
<feature type="glycosylation site" description="N-linked (GlcNAc...) asparagine" evidence="3">
    <location>
        <position position="174"/>
    </location>
</feature>
<feature type="glycosylation site" description="N-linked (GlcNAc...) asparagine" evidence="3">
    <location>
        <position position="271"/>
    </location>
</feature>
<feature type="glycosylation site" description="N-linked (GlcNAc...) asparagine" evidence="3">
    <location>
        <position position="281"/>
    </location>
</feature>
<feature type="glycosylation site" description="N-linked (GlcNAc...) asparagine" evidence="3">
    <location>
        <position position="384"/>
    </location>
</feature>
<feature type="glycosylation site" description="N-linked (GlcNAc...) asparagine" evidence="3">
    <location>
        <position position="414"/>
    </location>
</feature>
<feature type="glycosylation site" description="N-linked (GlcNAc...) asparagine" evidence="3">
    <location>
        <position position="466"/>
    </location>
</feature>
<feature type="glycosylation site" description="N-linked (GlcNAc...) asparagine" evidence="3">
    <location>
        <position position="567"/>
    </location>
</feature>
<feature type="glycosylation site" description="N-linked (GlcNAc...) asparagine" evidence="3">
    <location>
        <position position="595"/>
    </location>
</feature>
<feature type="disulfide bond" evidence="4">
    <location>
        <begin position="41"/>
        <end position="177"/>
    </location>
</feature>
<feature type="disulfide bond" evidence="4">
    <location>
        <begin position="46"/>
        <end position="112"/>
    </location>
</feature>
<feature type="disulfide bond" evidence="4">
    <location>
        <begin position="171"/>
        <end position="235"/>
    </location>
</feature>
<feature type="disulfide bond" evidence="4">
    <location>
        <begin position="278"/>
        <end position="330"/>
    </location>
</feature>
<feature type="disulfide bond" evidence="4">
    <location>
        <begin position="374"/>
        <end position="417"/>
    </location>
</feature>
<feature type="disulfide bond" evidence="4">
    <location>
        <begin position="463"/>
        <end position="505"/>
    </location>
</feature>
<feature type="disulfide bond" evidence="4">
    <location>
        <begin position="550"/>
        <end position="592"/>
    </location>
</feature>
<feature type="disulfide bond" evidence="4">
    <location>
        <begin position="637"/>
        <end position="680"/>
    </location>
</feature>
<feature type="splice variant" id="VSP_002532" description="In isoform 2." evidence="15">
    <location>
        <begin position="54"/>
        <end position="121"/>
    </location>
</feature>
<feature type="splice variant" id="VSP_002533" description="In isoform 3." evidence="15">
    <location>
        <begin position="106"/>
        <end position="139"/>
    </location>
</feature>
<feature type="sequence variant" description="In strain: DBA/2J and NZW/LacJ." evidence="9 11">
    <original>V</original>
    <variation>A</variation>
    <location>
        <position position="15"/>
    </location>
</feature>
<feature type="sequence variant" description="In strain: DBA/2J and NZW/LacJ." evidence="9 11">
    <original>R</original>
    <variation>Q</variation>
    <location>
        <position position="19"/>
    </location>
</feature>
<feature type="sequence variant" description="In strain: DBA/2J, BXSB and NZW/LacJ." evidence="7 9 11">
    <original>T</original>
    <variation>K</variation>
    <location>
        <position position="76"/>
    </location>
</feature>
<feature type="sequence variant" description="In strain: DBA/2J and NZW/LacJ." evidence="9 11">
    <original>ATKT</original>
    <variation>KAEP</variation>
    <location>
        <begin position="83"/>
        <end position="86"/>
    </location>
</feature>
<feature type="sequence variant" description="In strain: NZW/LacJ." evidence="9">
    <original>AT</original>
    <variation>KA</variation>
    <location>
        <begin position="83"/>
        <end position="84"/>
    </location>
</feature>
<feature type="sequence variant" description="In strain: NZW/LacJ." evidence="9">
    <location>
        <begin position="85"/>
        <end position="90"/>
    </location>
</feature>
<feature type="sequence variant" description="In strain: DBA/2J and NZW/LacJ." evidence="9 11">
    <location>
        <begin position="88"/>
        <end position="93"/>
    </location>
</feature>
<feature type="sequence variant" description="In strain: NZW/LacJ." evidence="9">
    <original>SE</original>
    <variation>PG</variation>
    <location>
        <begin position="92"/>
        <end position="93"/>
    </location>
</feature>
<feature type="sequence variant" description="In strain: DBA/2J and NZW/LacJ." evidence="9 11">
    <original>LS</original>
    <variation>PP</variation>
    <location>
        <begin position="96"/>
        <end position="97"/>
    </location>
</feature>
<feature type="sequence variant" description="In strain: DBA/2J and NZW/LacJ." evidence="9 11">
    <original>G</original>
    <variation>R</variation>
    <location>
        <position position="100"/>
    </location>
</feature>
<feature type="sequence variant" description="In strain: DBA/2J and NZW/LacJ." evidence="9 11">
    <original>R</original>
    <variation>S</variation>
    <location>
        <position position="108"/>
    </location>
</feature>
<feature type="sequence variant" description="In strain: BXSB." evidence="7">
    <original>PIR</original>
    <variation>LIH</variation>
    <location>
        <begin position="118"/>
        <end position="120"/>
    </location>
</feature>
<feature type="sequence variant" description="In strain: DBA/2J, BXSB and NZW/LacJ." evidence="7 9 11">
    <original>G</original>
    <variation>E</variation>
    <location>
        <position position="179"/>
    </location>
</feature>
<feature type="sequence variant" description="In strain: DBA/2J and BXSB." evidence="7 11">
    <original>K</original>
    <variation>Q</variation>
    <location>
        <position position="185"/>
    </location>
</feature>
<feature type="sequence variant" description="In strain: DBA/2J and BXSB." evidence="7 11">
    <original>E</original>
    <variation>K</variation>
    <location>
        <position position="192"/>
    </location>
</feature>
<feature type="sequence variant" description="In strain: DBA/2J and BXSB." evidence="7 11">
    <original>I</original>
    <variation>V</variation>
    <location>
        <position position="196"/>
    </location>
</feature>
<feature type="sequence variant" description="In strain: DBA/2J and BXSB." evidence="7 11">
    <original>S</original>
    <variation>P</variation>
    <location>
        <position position="198"/>
    </location>
</feature>
<feature type="sequence variant" description="In strain: DBA/2J and BXSB." evidence="7 11">
    <original>K</original>
    <variation>E</variation>
    <location>
        <position position="242"/>
    </location>
</feature>
<feature type="sequence variant" description="In strain: MRL/MpJ." evidence="7">
    <original>R</original>
    <variation>H</variation>
    <location>
        <position position="250"/>
    </location>
</feature>
<feature type="sequence variant" description="In strain: BXSB." evidence="7">
    <original>R</original>
    <variation>Q</variation>
    <location>
        <position position="279"/>
    </location>
</feature>
<feature type="sequence variant" description="In strain: BXSB." evidence="7">
    <original>T</original>
    <variation>I</variation>
    <location>
        <position position="386"/>
    </location>
</feature>
<feature type="sequence variant" description="In strain: BXSB." evidence="7">
    <original>P</original>
    <variation>H</variation>
    <location>
        <position position="393"/>
    </location>
</feature>
<feature type="sequence variant" description="In strain: BXSB." evidence="7">
    <original>P</original>
    <variation>L</variation>
    <location>
        <position position="409"/>
    </location>
</feature>
<feature type="sequence variant" description="In strain: BXSB." evidence="7">
    <original>H</original>
    <variation>R</variation>
    <location>
        <position position="425"/>
    </location>
</feature>
<feature type="sequence variant" description="In strain: BXSB." evidence="7">
    <original>D</original>
    <variation>G</variation>
    <location>
        <position position="429"/>
    </location>
</feature>
<feature type="sequence variant" description="In strain: BXSB." evidence="7">
    <original>P</original>
    <variation>S</variation>
    <location>
        <position position="488"/>
    </location>
</feature>
<feature type="sequence variant" description="In strain: BXSB." evidence="7">
    <original>E</original>
    <variation>K</variation>
    <location>
        <position position="554"/>
    </location>
</feature>
<feature type="sequence variant" description="In strain: BXSB." evidence="7">
    <original>H</original>
    <variation>R</variation>
    <location>
        <position position="626"/>
    </location>
</feature>
<feature type="sequence variant" description="In strain: DBA/2J." evidence="11">
    <original>T</original>
    <variation>M</variation>
    <location>
        <position position="793"/>
    </location>
</feature>
<feature type="sequence variant" description="In strain: DBA/2J; BXSB and MRL/MpJ." evidence="7 11">
    <original>T</original>
    <variation>A</variation>
    <location>
        <position position="796"/>
    </location>
</feature>
<feature type="sequence variant" description="In strain: BXSB and MRL/MpJ." evidence="7">
    <original>S</original>
    <variation>T</variation>
    <location>
        <position position="814"/>
    </location>
</feature>
<feature type="mutagenesis site" description="Abolishes binding to GRB2." evidence="6">
    <original>Y</original>
    <variation>F</variation>
    <location>
        <position position="828"/>
    </location>
</feature>
<keyword id="KW-0025">Alternative splicing</keyword>
<keyword id="KW-0130">Cell adhesion</keyword>
<keyword id="KW-1003">Cell membrane</keyword>
<keyword id="KW-1015">Disulfide bond</keyword>
<keyword id="KW-0325">Glycoprotein</keyword>
<keyword id="KW-0393">Immunoglobulin domain</keyword>
<keyword id="KW-0430">Lectin</keyword>
<keyword id="KW-0472">Membrane</keyword>
<keyword id="KW-0597">Phosphoprotein</keyword>
<keyword id="KW-1185">Reference proteome</keyword>
<keyword id="KW-0677">Repeat</keyword>
<keyword id="KW-0732">Signal</keyword>
<keyword id="KW-0812">Transmembrane</keyword>
<keyword id="KW-1133">Transmembrane helix</keyword>
<organism>
    <name type="scientific">Mus musculus</name>
    <name type="common">Mouse</name>
    <dbReference type="NCBI Taxonomy" id="10090"/>
    <lineage>
        <taxon>Eukaryota</taxon>
        <taxon>Metazoa</taxon>
        <taxon>Chordata</taxon>
        <taxon>Craniata</taxon>
        <taxon>Vertebrata</taxon>
        <taxon>Euteleostomi</taxon>
        <taxon>Mammalia</taxon>
        <taxon>Eutheria</taxon>
        <taxon>Euarchontoglires</taxon>
        <taxon>Glires</taxon>
        <taxon>Rodentia</taxon>
        <taxon>Myomorpha</taxon>
        <taxon>Muroidea</taxon>
        <taxon>Muridae</taxon>
        <taxon>Murinae</taxon>
        <taxon>Mus</taxon>
        <taxon>Mus</taxon>
    </lineage>
</organism>